<dbReference type="EMBL" id="AY509253">
    <property type="protein sequence ID" value="AAS00914.1"/>
    <property type="molecule type" value="Genomic_DNA"/>
</dbReference>
<dbReference type="RefSeq" id="YP_024567.1">
    <property type="nucleotide sequence ID" value="NC_005881.2"/>
</dbReference>
<dbReference type="KEGG" id="vg:2948158"/>
<dbReference type="Proteomes" id="UP000007021">
    <property type="component" value="Segment"/>
</dbReference>
<dbReference type="GO" id="GO:0033644">
    <property type="term" value="C:host cell membrane"/>
    <property type="evidence" value="ECO:0007669"/>
    <property type="project" value="UniProtKB-SubCell"/>
</dbReference>
<dbReference type="GO" id="GO:0016020">
    <property type="term" value="C:membrane"/>
    <property type="evidence" value="ECO:0007669"/>
    <property type="project" value="UniProtKB-KW"/>
</dbReference>
<proteinExistence type="predicted"/>
<keyword id="KW-0325">Glycoprotein</keyword>
<keyword id="KW-1043">Host membrane</keyword>
<keyword id="KW-0472">Membrane</keyword>
<keyword id="KW-1185">Reference proteome</keyword>
<keyword id="KW-0812">Transmembrane</keyword>
<keyword id="KW-1133">Transmembrane helix</keyword>
<sequence>MSNNKQTAAPAATSNEKAENGAEKEAIEKFVEVVRNTPELQGEMFFDGCIIAMTKDAFKGKYRVFYGNGLHTSIMFGAGTAALDLMTPGSFLPPFPQRLIKSREGSAPTMEATDPMMSRVIILMNGECLDVNSELINRPKTMGDDAISNLTDDLNNITPKEGEATVKEWDSLPGGELRYLSKANKPDETYMKDLIEKYFEKAICHNGKKVEDYVFFLVANPIAMVSLARKGFMSNVNMHNYESFENNIVIPADDDELYFGDHTFKVAVNNERLNTSSVANCNAYVRPFFHGCNGFYQGRNKRIYPESHDLYRRDYIKDYNTDYKSLCYSRKTENVMPVCDFISSTAATLVLQKFPLNYVIEHKFTTEDDDYKTKMAMSVKLDLIKEIAIKNRYRPNVFDDNFHVSQDRIYATKYQGHLERNTISPNALHTYKTGGKLGIAGELMEGEKMSQWVHTDIASKFTSMENFNKNGGDEAALCDDEEKELGFGKMYVTSRLSSVFDFKSIFNANRMTTQHELSSQLGDTDTKKEQKEKRSKQGGSKLFNYKIKSAFNPVFNSLKSPAQKILFNMCGDRTLFKSVMEDALFLLRDEIFLEDKLVMTHPAFAESENPNHCQYCKCSFNNGMAGVENKDFCFCYLILRTMCALSAREPTQFNITNLWDKTAFPSELPPTTTETFDYNFNMNVRTIERKNKCSAYGNAVLTDSERENGFADPNLKEENGSKKKLQSYMKEVKLEALIKAVLTAEPTLLHPDQRINMDKITEGDEFYHKLEANRFAKSMGYKQDFTMGSIGPDETPNGSYQLSSIKSIRDVLLKDSKSSVDYELNKFIVVPGKMTHTIKGTKKSDDGDSKTDGSGDMEDDFTSLAKMTNRKRKAGGKDGPSKKKKKDGADKSLEKLARAMLLDLLEISIPNSDASLSLEEQNQEIRKFWREKQIHPDYIFLFPNAEEKRKLTPETTKQLCQKFMKVVGICRDMIRPEPTSSENIRLKLVTTYMAGVRDYIKRLAEFLAKKLNYSSVEEMRGYAMSSIRMKNESVKKTQSSWMDPQSTSDPVQKMMERKITSAYATHRIESANTKVLPYTDSKLIPVCSEIPIPARMILCSVGETESDGCKRLGYNIEGYKRNEKDIKMAGEKQQPHSYLTPLEMKIKMDTFQKEAENIEKEKYVDGNKPETAAREEIFKQVREKEINCGVYIPWEIMAKDLCENAGYKDSDVLDPAVLAHILKRADVKFEKLGNGGFASALNCKTIAKLLAGYLDTMEDVNVTRPSLITNIFSDMDTICSMVNKIGMNMKSFFGSYDYATFDMATFNLKDTLLKMISQEPELGSVLHLLITMATIYGVNTSTNGKLFYKSYERDSQAAVVGIGGILNIFLGMDACKSSNAAREIKQAQRKINPMITTHMDYNMKRGGGIDRWSTLDTAKCQGMSRYLGCYSFSTYPGQQGSNDIYTKLKLSGGFFYNSIPAHICAQSKSHNTNKVTMCLKNSGVLYSSFKRGGRNVDIAELLNRGDLDDINNTILSTNGLAQKIAAYFLSSIGIEPKTNGFPDMGNMSKSMFVRKIVKIHFSEFAEEDGEIMVERKVLKHILGFVYPDDSVVEKPDMFMVYDPSAMDVDEDEDEDMDDESDDESDGEEMSGE</sequence>
<name>Y022_OSHVF</name>
<feature type="chain" id="PRO_0000385053" description="Uncharacterized protein ORF22">
    <location>
        <begin position="1"/>
        <end position="1632"/>
    </location>
</feature>
<feature type="topological domain" description="Cytoplasmic" evidence="1">
    <location>
        <begin position="1"/>
        <end position="63"/>
    </location>
</feature>
<feature type="transmembrane region" description="Helical" evidence="1">
    <location>
        <begin position="64"/>
        <end position="86"/>
    </location>
</feature>
<feature type="topological domain" description="Extracellular" evidence="1">
    <location>
        <begin position="87"/>
        <end position="1632"/>
    </location>
</feature>
<feature type="region of interest" description="Disordered" evidence="2">
    <location>
        <begin position="1"/>
        <end position="23"/>
    </location>
</feature>
<feature type="region of interest" description="Disordered" evidence="2">
    <location>
        <begin position="516"/>
        <end position="538"/>
    </location>
</feature>
<feature type="region of interest" description="Disordered" evidence="2">
    <location>
        <begin position="838"/>
        <end position="890"/>
    </location>
</feature>
<feature type="region of interest" description="Disordered" evidence="2">
    <location>
        <begin position="1603"/>
        <end position="1632"/>
    </location>
</feature>
<feature type="compositionally biased region" description="Polar residues" evidence="2">
    <location>
        <begin position="1"/>
        <end position="15"/>
    </location>
</feature>
<feature type="compositionally biased region" description="Basic and acidic residues" evidence="2">
    <location>
        <begin position="842"/>
        <end position="853"/>
    </location>
</feature>
<feature type="compositionally biased region" description="Basic and acidic residues" evidence="2">
    <location>
        <begin position="875"/>
        <end position="890"/>
    </location>
</feature>
<feature type="compositionally biased region" description="Acidic residues" evidence="2">
    <location>
        <begin position="1607"/>
        <end position="1632"/>
    </location>
</feature>
<feature type="glycosylation site" description="N-linked (GlcNAc...) asparagine; by host" evidence="1">
    <location>
        <position position="149"/>
    </location>
</feature>
<feature type="glycosylation site" description="N-linked (GlcNAc...) asparagine; by host" evidence="1">
    <location>
        <position position="274"/>
    </location>
</feature>
<feature type="glycosylation site" description="N-linked (GlcNAc...) asparagine; by host" evidence="1">
    <location>
        <position position="654"/>
    </location>
</feature>
<feature type="glycosylation site" description="N-linked (GlcNAc...) asparagine; by host" evidence="1">
    <location>
        <position position="719"/>
    </location>
</feature>
<feature type="glycosylation site" description="N-linked (GlcNAc...) asparagine; by host" evidence="1">
    <location>
        <position position="797"/>
    </location>
</feature>
<feature type="glycosylation site" description="N-linked (GlcNAc...) asparagine; by host" evidence="1">
    <location>
        <position position="1012"/>
    </location>
</feature>
<feature type="glycosylation site" description="N-linked (GlcNAc...) asparagine; by host" evidence="1">
    <location>
        <position position="1031"/>
    </location>
</feature>
<feature type="glycosylation site" description="N-linked (GlcNAc...) asparagine; by host" evidence="1">
    <location>
        <position position="1261"/>
    </location>
</feature>
<feature type="glycosylation site" description="N-linked (GlcNAc...) asparagine; by host" evidence="1">
    <location>
        <position position="1339"/>
    </location>
</feature>
<feature type="glycosylation site" description="N-linked (GlcNAc...) asparagine; by host" evidence="1">
    <location>
        <position position="1511"/>
    </location>
</feature>
<feature type="glycosylation site" description="N-linked (GlcNAc...) asparagine; by host" evidence="1">
    <location>
        <position position="1546"/>
    </location>
</feature>
<gene>
    <name type="ORF">ORF22</name>
</gene>
<comment type="subcellular location">
    <subcellularLocation>
        <location evidence="3">Host membrane</location>
        <topology evidence="3">Single-pass membrane protein</topology>
    </subcellularLocation>
</comment>
<reference key="1">
    <citation type="journal article" date="2005" name="J. Gen. Virol.">
        <title>A novel class of herpesvirus with bivalve hosts.</title>
        <authorList>
            <person name="Davison A.J."/>
            <person name="Trus B.L."/>
            <person name="Cheng N."/>
            <person name="Steven A.C."/>
            <person name="Watson M.S."/>
            <person name="Cunningham C."/>
            <person name="Le Deuff R.M."/>
            <person name="Renault T."/>
        </authorList>
    </citation>
    <scope>NUCLEOTIDE SEQUENCE [LARGE SCALE GENOMIC DNA]</scope>
</reference>
<organism>
    <name type="scientific">Ostreid herpesvirus 1 (isolate France)</name>
    <name type="common">OsHV-1</name>
    <name type="synonym">Pacific oyster herpesvirus</name>
    <dbReference type="NCBI Taxonomy" id="654903"/>
    <lineage>
        <taxon>Viruses</taxon>
        <taxon>Duplodnaviria</taxon>
        <taxon>Heunggongvirae</taxon>
        <taxon>Peploviricota</taxon>
        <taxon>Herviviricetes</taxon>
        <taxon>Herpesvirales</taxon>
        <taxon>Malacoherpesviridae</taxon>
        <taxon>Ostreavirus</taxon>
        <taxon>Ostreavirus ostreidmalaco1</taxon>
        <taxon>Ostreid herpesvirus 1</taxon>
    </lineage>
</organism>
<evidence type="ECO:0000255" key="1"/>
<evidence type="ECO:0000256" key="2">
    <source>
        <dbReference type="SAM" id="MobiDB-lite"/>
    </source>
</evidence>
<evidence type="ECO:0000305" key="3"/>
<organismHost>
    <name type="scientific">Magallana gigas</name>
    <name type="common">Pacific oyster</name>
    <name type="synonym">Crassostrea gigas</name>
    <dbReference type="NCBI Taxonomy" id="29159"/>
</organismHost>
<organismHost>
    <name type="scientific">Pecten maximus</name>
    <name type="common">King scallop</name>
    <name type="synonym">Pilgrim's clam</name>
    <dbReference type="NCBI Taxonomy" id="6579"/>
</organismHost>
<protein>
    <recommendedName>
        <fullName>Uncharacterized protein ORF22</fullName>
    </recommendedName>
</protein>
<accession>Q6R7K1</accession>